<protein>
    <recommendedName>
        <fullName evidence="1">Bifunctional protein PyrR</fullName>
    </recommendedName>
    <domain>
        <recommendedName>
            <fullName evidence="1">Pyrimidine operon regulatory protein</fullName>
        </recommendedName>
    </domain>
    <domain>
        <recommendedName>
            <fullName evidence="1">Uracil phosphoribosyltransferase</fullName>
            <shortName evidence="1">UPRTase</shortName>
            <ecNumber evidence="1">2.4.2.9</ecNumber>
        </recommendedName>
    </domain>
</protein>
<dbReference type="EC" id="2.4.2.9" evidence="1"/>
<dbReference type="EMBL" id="CP000746">
    <property type="protein sequence ID" value="ABR74103.1"/>
    <property type="molecule type" value="Genomic_DNA"/>
</dbReference>
<dbReference type="RefSeq" id="WP_012072482.1">
    <property type="nucleotide sequence ID" value="NC_009655.1"/>
</dbReference>
<dbReference type="SMR" id="A6VMA6"/>
<dbReference type="STRING" id="339671.Asuc_0731"/>
<dbReference type="KEGG" id="asu:Asuc_0731"/>
<dbReference type="eggNOG" id="COG2065">
    <property type="taxonomic scope" value="Bacteria"/>
</dbReference>
<dbReference type="HOGENOM" id="CLU_094234_2_1_6"/>
<dbReference type="OrthoDB" id="9802227at2"/>
<dbReference type="Proteomes" id="UP000001114">
    <property type="component" value="Chromosome"/>
</dbReference>
<dbReference type="GO" id="GO:0004845">
    <property type="term" value="F:uracil phosphoribosyltransferase activity"/>
    <property type="evidence" value="ECO:0007669"/>
    <property type="project" value="UniProtKB-UniRule"/>
</dbReference>
<dbReference type="GO" id="GO:0006355">
    <property type="term" value="P:regulation of DNA-templated transcription"/>
    <property type="evidence" value="ECO:0007669"/>
    <property type="project" value="UniProtKB-UniRule"/>
</dbReference>
<dbReference type="CDD" id="cd06223">
    <property type="entry name" value="PRTases_typeI"/>
    <property type="match status" value="1"/>
</dbReference>
<dbReference type="FunFam" id="3.40.50.2020:FF:000020">
    <property type="entry name" value="Bifunctional protein PyrR"/>
    <property type="match status" value="1"/>
</dbReference>
<dbReference type="Gene3D" id="3.40.50.2020">
    <property type="match status" value="1"/>
</dbReference>
<dbReference type="HAMAP" id="MF_01219">
    <property type="entry name" value="PyrR"/>
    <property type="match status" value="1"/>
</dbReference>
<dbReference type="InterPro" id="IPR000836">
    <property type="entry name" value="PRibTrfase_dom"/>
</dbReference>
<dbReference type="InterPro" id="IPR029057">
    <property type="entry name" value="PRTase-like"/>
</dbReference>
<dbReference type="InterPro" id="IPR023050">
    <property type="entry name" value="PyrR"/>
</dbReference>
<dbReference type="InterPro" id="IPR050137">
    <property type="entry name" value="PyrR_bifunctional"/>
</dbReference>
<dbReference type="NCBIfam" id="NF003549">
    <property type="entry name" value="PRK05205.1-5"/>
    <property type="match status" value="1"/>
</dbReference>
<dbReference type="PANTHER" id="PTHR11608">
    <property type="entry name" value="BIFUNCTIONAL PROTEIN PYRR"/>
    <property type="match status" value="1"/>
</dbReference>
<dbReference type="PANTHER" id="PTHR11608:SF0">
    <property type="entry name" value="BIFUNCTIONAL PROTEIN PYRR"/>
    <property type="match status" value="1"/>
</dbReference>
<dbReference type="Pfam" id="PF00156">
    <property type="entry name" value="Pribosyltran"/>
    <property type="match status" value="1"/>
</dbReference>
<dbReference type="SUPFAM" id="SSF53271">
    <property type="entry name" value="PRTase-like"/>
    <property type="match status" value="1"/>
</dbReference>
<accession>A6VMA6</accession>
<reference key="1">
    <citation type="journal article" date="2010" name="BMC Genomics">
        <title>A genomic perspective on the potential of Actinobacillus succinogenes for industrial succinate production.</title>
        <authorList>
            <person name="McKinlay J.B."/>
            <person name="Laivenieks M."/>
            <person name="Schindler B.D."/>
            <person name="McKinlay A.A."/>
            <person name="Siddaramappa S."/>
            <person name="Challacombe J.F."/>
            <person name="Lowry S.R."/>
            <person name="Clum A."/>
            <person name="Lapidus A.L."/>
            <person name="Burkhart K.B."/>
            <person name="Harkins V."/>
            <person name="Vieille C."/>
        </authorList>
    </citation>
    <scope>NUCLEOTIDE SEQUENCE [LARGE SCALE GENOMIC DNA]</scope>
    <source>
        <strain>ATCC 55618 / DSM 22257 / CCUG 43843 / 130Z</strain>
    </source>
</reference>
<organism>
    <name type="scientific">Actinobacillus succinogenes (strain ATCC 55618 / DSM 22257 / CCUG 43843 / 130Z)</name>
    <dbReference type="NCBI Taxonomy" id="339671"/>
    <lineage>
        <taxon>Bacteria</taxon>
        <taxon>Pseudomonadati</taxon>
        <taxon>Pseudomonadota</taxon>
        <taxon>Gammaproteobacteria</taxon>
        <taxon>Pasteurellales</taxon>
        <taxon>Pasteurellaceae</taxon>
        <taxon>Actinobacillus</taxon>
    </lineage>
</organism>
<gene>
    <name evidence="1" type="primary">pyrR</name>
    <name type="ordered locus">Asuc_0731</name>
</gene>
<feature type="chain" id="PRO_1000073133" description="Bifunctional protein PyrR">
    <location>
        <begin position="1"/>
        <end position="179"/>
    </location>
</feature>
<feature type="short sequence motif" description="PRPP-binding" evidence="1">
    <location>
        <begin position="100"/>
        <end position="112"/>
    </location>
</feature>
<name>PYRR_ACTSZ</name>
<proteinExistence type="inferred from homology"/>
<comment type="function">
    <text evidence="1">Regulates the transcription of the pyrimidine nucleotide (pyr) operon in response to exogenous pyrimidines.</text>
</comment>
<comment type="function">
    <text evidence="1">Also displays a weak uracil phosphoribosyltransferase activity which is not physiologically significant.</text>
</comment>
<comment type="catalytic activity">
    <reaction evidence="1">
        <text>UMP + diphosphate = 5-phospho-alpha-D-ribose 1-diphosphate + uracil</text>
        <dbReference type="Rhea" id="RHEA:13017"/>
        <dbReference type="ChEBI" id="CHEBI:17568"/>
        <dbReference type="ChEBI" id="CHEBI:33019"/>
        <dbReference type="ChEBI" id="CHEBI:57865"/>
        <dbReference type="ChEBI" id="CHEBI:58017"/>
        <dbReference type="EC" id="2.4.2.9"/>
    </reaction>
</comment>
<comment type="similarity">
    <text evidence="1">Belongs to the purine/pyrimidine phosphoribosyltransferase family. PyrR subfamily.</text>
</comment>
<sequence>MEKIIIDEDQFMRTISRISHEIIEKHKNLNDLVIVGIKRRGAEIAELVKRKINELTGSRIPSIDLDITFYRDDLEYAEPNSQSPVYNGSSDFISVQNKTVILVDDVLFTGRTIRAALDALVDFGRASKVELVIFVDRGHRELPIRADYVGKNVPTSRSEKVQVRTMKFDGCYEVALLSK</sequence>
<evidence type="ECO:0000255" key="1">
    <source>
        <dbReference type="HAMAP-Rule" id="MF_01219"/>
    </source>
</evidence>
<keyword id="KW-0328">Glycosyltransferase</keyword>
<keyword id="KW-1185">Reference proteome</keyword>
<keyword id="KW-0804">Transcription</keyword>
<keyword id="KW-0805">Transcription regulation</keyword>
<keyword id="KW-0808">Transferase</keyword>